<comment type="function">
    <text evidence="1">Catalyzes the attachment of valine to tRNA(Val). As ValRS can inadvertently accommodate and process structurally similar amino acids such as threonine, to avoid such errors, it has a 'posttransfer' editing activity that hydrolyzes mischarged Thr-tRNA(Val) in a tRNA-dependent manner.</text>
</comment>
<comment type="catalytic activity">
    <reaction evidence="1">
        <text>tRNA(Val) + L-valine + ATP = L-valyl-tRNA(Val) + AMP + diphosphate</text>
        <dbReference type="Rhea" id="RHEA:10704"/>
        <dbReference type="Rhea" id="RHEA-COMP:9672"/>
        <dbReference type="Rhea" id="RHEA-COMP:9708"/>
        <dbReference type="ChEBI" id="CHEBI:30616"/>
        <dbReference type="ChEBI" id="CHEBI:33019"/>
        <dbReference type="ChEBI" id="CHEBI:57762"/>
        <dbReference type="ChEBI" id="CHEBI:78442"/>
        <dbReference type="ChEBI" id="CHEBI:78537"/>
        <dbReference type="ChEBI" id="CHEBI:456215"/>
        <dbReference type="EC" id="6.1.1.9"/>
    </reaction>
</comment>
<comment type="subunit">
    <text evidence="1">Monomer.</text>
</comment>
<comment type="subcellular location">
    <subcellularLocation>
        <location evidence="1">Cytoplasm</location>
    </subcellularLocation>
</comment>
<comment type="domain">
    <text evidence="1">ValRS has two distinct active sites: one for aminoacylation and one for editing. The misactivated threonine is translocated from the active site to the editing site.</text>
</comment>
<comment type="domain">
    <text evidence="1">The C-terminal coiled-coil domain is crucial for aminoacylation activity.</text>
</comment>
<comment type="similarity">
    <text evidence="1">Belongs to the class-I aminoacyl-tRNA synthetase family. ValS type 1 subfamily.</text>
</comment>
<name>SYV_MYCGE</name>
<sequence length="837" mass="97464">MKDKFSFQKNYDFNLVSDGLYEIWNNAGFFKPKDKNNSFTAILPPPNLTGTLHIGHAFEVSITDQIMRFKKMQGFSINWIPGFDHAGIATQTKYEKIALKENQKYFDADDDKKSEMIMNWALNQSEIIKNQLKSLGVCLNWSETKFTLSEQANKIVNNCFKNLYENGFIYQAYTLVNWDTKLNTAISNIEVINKPVNQHLHYVVYKLANDSKQELIVATTRPETIFADVCLLVNPKDKRYTNFWNKLVVNPLTGKQIPVVTDSYVDIKFGTGILKCTPAHDFNDYEINTKYKFDFLSCIDSNGILNQNASKFQGLSVLQARNKIVKWLEKNKLLVKSIPLTSNVGFSERSGTVVEPMLSKQWFVDLPKLKDHLYLKKYPDFIPKRFNKQVSNWLNKLKPWCISRQLIWGHKIPVWFENNTGEIVVGEKPSKNLQNYTRSKDVLDTWFSSSLWPLICLNWEQDDSFHETELLVTGYDILFFWVLRMLFNSFFETKKLPFKTVLIHGLVRDEQNRKMSKSLNNGIDPVDLIRNYGADAVRLFLCSNHTPGDDLIFSEQKIKSAWNFLNKLWNVTKFVIQLENDQEISYDLDKLSLSETWILAKLDKVIQKITKLLDKFQLALANQILVKFVWDDFCNTFIEAIKKEPNQLKPQLFYTAKSVLSNIAILLSITVPFLSERIYQQFNNKSVMQATWPLATKIKIPKLFDLVLAAINDLRNYRKQYMLNSQQKLVVILSGKNAVDVKQYFNFSWIELKIETNKKVSFKYQIVDDTTQRLKSLQKQQAFFESEVKRSQAIVKNKSFLEKAPKEKVKSEFLKLEEYQKKLTETNQLIAKLTKAH</sequence>
<keyword id="KW-0030">Aminoacyl-tRNA synthetase</keyword>
<keyword id="KW-0067">ATP-binding</keyword>
<keyword id="KW-0175">Coiled coil</keyword>
<keyword id="KW-0963">Cytoplasm</keyword>
<keyword id="KW-0436">Ligase</keyword>
<keyword id="KW-0547">Nucleotide-binding</keyword>
<keyword id="KW-0648">Protein biosynthesis</keyword>
<keyword id="KW-1185">Reference proteome</keyword>
<protein>
    <recommendedName>
        <fullName evidence="1">Valine--tRNA ligase</fullName>
        <ecNumber evidence="1">6.1.1.9</ecNumber>
    </recommendedName>
    <alternativeName>
        <fullName evidence="1">Valyl-tRNA synthetase</fullName>
        <shortName evidence="1">ValRS</shortName>
    </alternativeName>
</protein>
<reference key="1">
    <citation type="journal article" date="1995" name="Science">
        <title>The minimal gene complement of Mycoplasma genitalium.</title>
        <authorList>
            <person name="Fraser C.M."/>
            <person name="Gocayne J.D."/>
            <person name="White O."/>
            <person name="Adams M.D."/>
            <person name="Clayton R.A."/>
            <person name="Fleischmann R.D."/>
            <person name="Bult C.J."/>
            <person name="Kerlavage A.R."/>
            <person name="Sutton G.G."/>
            <person name="Kelley J.M."/>
            <person name="Fritchman J.L."/>
            <person name="Weidman J.F."/>
            <person name="Small K.V."/>
            <person name="Sandusky M."/>
            <person name="Fuhrmann J.L."/>
            <person name="Nguyen D.T."/>
            <person name="Utterback T.R."/>
            <person name="Saudek D.M."/>
            <person name="Phillips C.A."/>
            <person name="Merrick J.M."/>
            <person name="Tomb J.-F."/>
            <person name="Dougherty B.A."/>
            <person name="Bott K.F."/>
            <person name="Hu P.-C."/>
            <person name="Lucier T.S."/>
            <person name="Peterson S.N."/>
            <person name="Smith H.O."/>
            <person name="Hutchison C.A. III"/>
            <person name="Venter J.C."/>
        </authorList>
    </citation>
    <scope>NUCLEOTIDE SEQUENCE [LARGE SCALE GENOMIC DNA]</scope>
    <source>
        <strain>ATCC 33530 / DSM 19775 / NCTC 10195 / G37</strain>
    </source>
</reference>
<reference key="2">
    <citation type="journal article" date="1993" name="J. Bacteriol.">
        <title>A survey of the Mycoplasma genitalium genome by using random sequencing.</title>
        <authorList>
            <person name="Peterson S.N."/>
            <person name="Hu P.-C."/>
            <person name="Bott K.F."/>
            <person name="Hutchison C.A. III"/>
        </authorList>
    </citation>
    <scope>NUCLEOTIDE SEQUENCE [GENOMIC DNA] OF 801-837</scope>
    <source>
        <strain>ATCC 33530 / DSM 19775 / NCTC 10195 / G37</strain>
    </source>
</reference>
<organism>
    <name type="scientific">Mycoplasma genitalium (strain ATCC 33530 / DSM 19775 / NCTC 10195 / G37)</name>
    <name type="common">Mycoplasmoides genitalium</name>
    <dbReference type="NCBI Taxonomy" id="243273"/>
    <lineage>
        <taxon>Bacteria</taxon>
        <taxon>Bacillati</taxon>
        <taxon>Mycoplasmatota</taxon>
        <taxon>Mycoplasmoidales</taxon>
        <taxon>Mycoplasmoidaceae</taxon>
        <taxon>Mycoplasmoides</taxon>
    </lineage>
</organism>
<dbReference type="EC" id="6.1.1.9" evidence="1"/>
<dbReference type="EMBL" id="L43967">
    <property type="protein sequence ID" value="AAC71557.1"/>
    <property type="molecule type" value="Genomic_DNA"/>
</dbReference>
<dbReference type="EMBL" id="U02249">
    <property type="protein sequence ID" value="AAD12537.1"/>
    <property type="molecule type" value="Genomic_DNA"/>
</dbReference>
<dbReference type="PIR" id="I64236">
    <property type="entry name" value="I64236"/>
</dbReference>
<dbReference type="RefSeq" id="WP_010869437.1">
    <property type="nucleotide sequence ID" value="NC_000908.2"/>
</dbReference>
<dbReference type="SMR" id="P47576"/>
<dbReference type="FunCoup" id="P47576">
    <property type="interactions" value="201"/>
</dbReference>
<dbReference type="STRING" id="243273.MG_334"/>
<dbReference type="GeneID" id="88282507"/>
<dbReference type="KEGG" id="mge:MG_334"/>
<dbReference type="eggNOG" id="COG0525">
    <property type="taxonomic scope" value="Bacteria"/>
</dbReference>
<dbReference type="HOGENOM" id="CLU_001493_0_2_14"/>
<dbReference type="InParanoid" id="P47576"/>
<dbReference type="OrthoDB" id="9810365at2"/>
<dbReference type="BioCyc" id="MGEN243273:G1GJ2-416-MONOMER"/>
<dbReference type="Proteomes" id="UP000000807">
    <property type="component" value="Chromosome"/>
</dbReference>
<dbReference type="GO" id="GO:0005829">
    <property type="term" value="C:cytosol"/>
    <property type="evidence" value="ECO:0000318"/>
    <property type="project" value="GO_Central"/>
</dbReference>
<dbReference type="GO" id="GO:0002161">
    <property type="term" value="F:aminoacyl-tRNA deacylase activity"/>
    <property type="evidence" value="ECO:0007669"/>
    <property type="project" value="InterPro"/>
</dbReference>
<dbReference type="GO" id="GO:0005524">
    <property type="term" value="F:ATP binding"/>
    <property type="evidence" value="ECO:0007669"/>
    <property type="project" value="UniProtKB-UniRule"/>
</dbReference>
<dbReference type="GO" id="GO:0004832">
    <property type="term" value="F:valine-tRNA ligase activity"/>
    <property type="evidence" value="ECO:0000318"/>
    <property type="project" value="GO_Central"/>
</dbReference>
<dbReference type="GO" id="GO:0006438">
    <property type="term" value="P:valyl-tRNA aminoacylation"/>
    <property type="evidence" value="ECO:0000318"/>
    <property type="project" value="GO_Central"/>
</dbReference>
<dbReference type="CDD" id="cd07962">
    <property type="entry name" value="Anticodon_Ia_Val"/>
    <property type="match status" value="1"/>
</dbReference>
<dbReference type="CDD" id="cd00817">
    <property type="entry name" value="ValRS_core"/>
    <property type="match status" value="1"/>
</dbReference>
<dbReference type="Gene3D" id="3.40.50.620">
    <property type="entry name" value="HUPs"/>
    <property type="match status" value="2"/>
</dbReference>
<dbReference type="Gene3D" id="1.10.730.10">
    <property type="entry name" value="Isoleucyl-tRNA Synthetase, Domain 1"/>
    <property type="match status" value="1"/>
</dbReference>
<dbReference type="Gene3D" id="1.10.287.380">
    <property type="entry name" value="Valyl-tRNA synthetase, C-terminal domain"/>
    <property type="match status" value="1"/>
</dbReference>
<dbReference type="HAMAP" id="MF_02004">
    <property type="entry name" value="Val_tRNA_synth_type1"/>
    <property type="match status" value="1"/>
</dbReference>
<dbReference type="InterPro" id="IPR001412">
    <property type="entry name" value="aa-tRNA-synth_I_CS"/>
</dbReference>
<dbReference type="InterPro" id="IPR002300">
    <property type="entry name" value="aa-tRNA-synth_Ia"/>
</dbReference>
<dbReference type="InterPro" id="IPR033705">
    <property type="entry name" value="Anticodon_Ia_Val"/>
</dbReference>
<dbReference type="InterPro" id="IPR013155">
    <property type="entry name" value="M/V/L/I-tRNA-synth_anticd-bd"/>
</dbReference>
<dbReference type="InterPro" id="IPR014729">
    <property type="entry name" value="Rossmann-like_a/b/a_fold"/>
</dbReference>
<dbReference type="InterPro" id="IPR010978">
    <property type="entry name" value="tRNA-bd_arm"/>
</dbReference>
<dbReference type="InterPro" id="IPR009080">
    <property type="entry name" value="tRNAsynth_Ia_anticodon-bd"/>
</dbReference>
<dbReference type="InterPro" id="IPR037118">
    <property type="entry name" value="Val-tRNA_synth_C_sf"/>
</dbReference>
<dbReference type="InterPro" id="IPR009008">
    <property type="entry name" value="Val/Leu/Ile-tRNA-synth_edit"/>
</dbReference>
<dbReference type="InterPro" id="IPR002303">
    <property type="entry name" value="Valyl-tRNA_ligase"/>
</dbReference>
<dbReference type="NCBIfam" id="NF004349">
    <property type="entry name" value="PRK05729.1"/>
    <property type="match status" value="1"/>
</dbReference>
<dbReference type="NCBIfam" id="TIGR00422">
    <property type="entry name" value="valS"/>
    <property type="match status" value="1"/>
</dbReference>
<dbReference type="PANTHER" id="PTHR11946:SF93">
    <property type="entry name" value="VALINE--TRNA LIGASE, CHLOROPLASTIC_MITOCHONDRIAL 2"/>
    <property type="match status" value="1"/>
</dbReference>
<dbReference type="PANTHER" id="PTHR11946">
    <property type="entry name" value="VALYL-TRNA SYNTHETASES"/>
    <property type="match status" value="1"/>
</dbReference>
<dbReference type="Pfam" id="PF08264">
    <property type="entry name" value="Anticodon_1"/>
    <property type="match status" value="1"/>
</dbReference>
<dbReference type="Pfam" id="PF00133">
    <property type="entry name" value="tRNA-synt_1"/>
    <property type="match status" value="1"/>
</dbReference>
<dbReference type="PRINTS" id="PR00986">
    <property type="entry name" value="TRNASYNTHVAL"/>
</dbReference>
<dbReference type="SUPFAM" id="SSF47323">
    <property type="entry name" value="Anticodon-binding domain of a subclass of class I aminoacyl-tRNA synthetases"/>
    <property type="match status" value="1"/>
</dbReference>
<dbReference type="SUPFAM" id="SSF52374">
    <property type="entry name" value="Nucleotidylyl transferase"/>
    <property type="match status" value="1"/>
</dbReference>
<dbReference type="SUPFAM" id="SSF46589">
    <property type="entry name" value="tRNA-binding arm"/>
    <property type="match status" value="1"/>
</dbReference>
<dbReference type="SUPFAM" id="SSF50677">
    <property type="entry name" value="ValRS/IleRS/LeuRS editing domain"/>
    <property type="match status" value="1"/>
</dbReference>
<dbReference type="PROSITE" id="PS00178">
    <property type="entry name" value="AA_TRNA_LIGASE_I"/>
    <property type="match status" value="1"/>
</dbReference>
<evidence type="ECO:0000255" key="1">
    <source>
        <dbReference type="HAMAP-Rule" id="MF_02004"/>
    </source>
</evidence>
<gene>
    <name evidence="1" type="primary">valS</name>
    <name type="ordered locus">MG334</name>
</gene>
<feature type="chain" id="PRO_0000106230" description="Valine--tRNA ligase">
    <location>
        <begin position="1"/>
        <end position="837"/>
    </location>
</feature>
<feature type="coiled-coil region" evidence="1">
    <location>
        <begin position="767"/>
        <end position="837"/>
    </location>
</feature>
<feature type="short sequence motif" description="'HIGH' region">
    <location>
        <begin position="46"/>
        <end position="56"/>
    </location>
</feature>
<feature type="short sequence motif" description="'KMSKS' region">
    <location>
        <begin position="514"/>
        <end position="518"/>
    </location>
</feature>
<feature type="binding site" evidence="1">
    <location>
        <position position="517"/>
    </location>
    <ligand>
        <name>ATP</name>
        <dbReference type="ChEBI" id="CHEBI:30616"/>
    </ligand>
</feature>
<proteinExistence type="inferred from homology"/>
<accession>P47576</accession>